<reference key="1">
    <citation type="journal article" date="2004" name="J. Gen. Virol.">
        <title>Genetic content of wild-type human cytomegalovirus.</title>
        <authorList>
            <person name="Dolan A."/>
            <person name="Cunningham C."/>
            <person name="Hector R.D."/>
            <person name="Hassan-Walker A.F."/>
            <person name="Lee L."/>
            <person name="Addison C."/>
            <person name="Dargan D.J."/>
            <person name="McGeoch D.J."/>
            <person name="Gatherer D."/>
            <person name="Emery V.C."/>
            <person name="Griffiths P.D."/>
            <person name="Sinzger C."/>
            <person name="McSharry B.P."/>
            <person name="Wilkinson G.W.G."/>
            <person name="Davison A.J."/>
        </authorList>
    </citation>
    <scope>NUCLEOTIDE SEQUENCE [LARGE SCALE GENOMIC DNA]</scope>
</reference>
<organism>
    <name type="scientific">Human cytomegalovirus (strain Merlin)</name>
    <name type="common">HHV-5</name>
    <name type="synonym">Human herpesvirus 5</name>
    <dbReference type="NCBI Taxonomy" id="295027"/>
    <lineage>
        <taxon>Viruses</taxon>
        <taxon>Duplodnaviria</taxon>
        <taxon>Heunggongvirae</taxon>
        <taxon>Peploviricota</taxon>
        <taxon>Herviviricetes</taxon>
        <taxon>Herpesvirales</taxon>
        <taxon>Orthoherpesviridae</taxon>
        <taxon>Betaherpesvirinae</taxon>
        <taxon>Cytomegalovirus</taxon>
        <taxon>Cytomegalovirus humanbeta5</taxon>
        <taxon>Human cytomegalovirus</taxon>
    </lineage>
</organism>
<keyword id="KW-1043">Host membrane</keyword>
<keyword id="KW-0472">Membrane</keyword>
<keyword id="KW-1185">Reference proteome</keyword>
<keyword id="KW-0812">Transmembrane</keyword>
<keyword id="KW-1133">Transmembrane helix</keyword>
<protein>
    <recommendedName>
        <fullName>Uncharacterized protein UL10</fullName>
    </recommendedName>
</protein>
<sequence>MRQLINHIVNHDLFRWSVVTAMIFYRYSETCMEVTVRVGDPVTLGSGHGYHPGQKVHWYNQSCVGIGNGENTHPICTYDPPKPGRQKTMKTTPLPSPLLYECHNSTLSILHVNVSDPRNYCRRKCPPKGNCEFPTCFTLSLISRTTTRKPEQKTTLLRLKTTPNKHTQHKRSTRRTSPKDYNVTGLPKGFADSFTGNVEAHRTKDAAHSAWILIIIIIIIVVILFFFKIPQRLREKWDTKGYLYKGTDGLPTTD</sequence>
<comment type="subcellular location">
    <subcellularLocation>
        <location evidence="3">Host membrane</location>
        <topology evidence="3">Single-pass membrane protein</topology>
    </subcellularLocation>
</comment>
<comment type="similarity">
    <text evidence="3">Belongs to the RL11 family.</text>
</comment>
<proteinExistence type="inferred from homology"/>
<name>UL10_HCMVM</name>
<accession>Q6SWC0</accession>
<accession>D2K3I0</accession>
<gene>
    <name type="primary">UL10</name>
</gene>
<feature type="chain" id="PRO_0000418275" description="Uncharacterized protein UL10">
    <location>
        <begin position="1"/>
        <end position="254"/>
    </location>
</feature>
<feature type="transmembrane region" description="Helical" evidence="1">
    <location>
        <begin position="207"/>
        <end position="227"/>
    </location>
</feature>
<feature type="region of interest" description="Disordered" evidence="2">
    <location>
        <begin position="163"/>
        <end position="182"/>
    </location>
</feature>
<feature type="compositionally biased region" description="Basic residues" evidence="2">
    <location>
        <begin position="166"/>
        <end position="176"/>
    </location>
</feature>
<organismHost>
    <name type="scientific">Homo sapiens</name>
    <name type="common">Human</name>
    <dbReference type="NCBI Taxonomy" id="9606"/>
</organismHost>
<evidence type="ECO:0000255" key="1"/>
<evidence type="ECO:0000256" key="2">
    <source>
        <dbReference type="SAM" id="MobiDB-lite"/>
    </source>
</evidence>
<evidence type="ECO:0000305" key="3"/>
<dbReference type="EMBL" id="AY446894">
    <property type="protein sequence ID" value="AAR31576.1"/>
    <property type="molecule type" value="Genomic_DNA"/>
</dbReference>
<dbReference type="RefSeq" id="YP_081470.1">
    <property type="nucleotide sequence ID" value="NC_006273.2"/>
</dbReference>
<dbReference type="DNASU" id="3077476"/>
<dbReference type="GeneID" id="3077476"/>
<dbReference type="KEGG" id="vg:3077476"/>
<dbReference type="Proteomes" id="UP000000938">
    <property type="component" value="Segment"/>
</dbReference>
<dbReference type="GO" id="GO:0033644">
    <property type="term" value="C:host cell membrane"/>
    <property type="evidence" value="ECO:0007669"/>
    <property type="project" value="UniProtKB-SubCell"/>
</dbReference>
<dbReference type="GO" id="GO:0016020">
    <property type="term" value="C:membrane"/>
    <property type="evidence" value="ECO:0007669"/>
    <property type="project" value="UniProtKB-KW"/>
</dbReference>